<comment type="function">
    <text evidence="1">Endoribonuclease that initiates mRNA decay.</text>
</comment>
<comment type="subcellular location">
    <subcellularLocation>
        <location evidence="1">Cell membrane</location>
        <topology evidence="1">Single-pass membrane protein</topology>
    </subcellularLocation>
</comment>
<comment type="similarity">
    <text evidence="1">Belongs to the RNase Y family.</text>
</comment>
<organism>
    <name type="scientific">Clostridium botulinum (strain ATCC 19397 / Type A)</name>
    <dbReference type="NCBI Taxonomy" id="441770"/>
    <lineage>
        <taxon>Bacteria</taxon>
        <taxon>Bacillati</taxon>
        <taxon>Bacillota</taxon>
        <taxon>Clostridia</taxon>
        <taxon>Eubacteriales</taxon>
        <taxon>Clostridiaceae</taxon>
        <taxon>Clostridium</taxon>
    </lineage>
</organism>
<sequence>MGPTKYIIIAVVIIIICVILGLYIVDKKAKEKLSEASKEARRLKEEAERDAEAKKKEAILEAKEEAHKLRAEVERENRERRNEVQRLERRIIQKEEALDKKSEALENKEEALNKKQQKIEDVETHMEELHEKQRTELERISGLTTEQAKEFLLEQVRKEVKHETAVMIKEIETKAKEEADKRAREVITYAIQRCAADHVAETTVHVVNLPNDEMKGRIIGREGRNIRTLETLTGVDLIIDDTPEAVILSGFDPIRREVARIALEKLIVDGRIHPARIEEMVEKAKKEVEISIKEEGEQATFETGIHGLHIELIRLLGRLKYRTSYGQNVLKHSIEVSHLAGLMASELGIDPTLAKRVGLLHDIGKAVDHEVEGPHAIIGSEIAKKYRESALVVNAIGAHHGDMEPQSLEAILVQAADAISAARPGARRETLEAYIKRLEKLEEIANECEGVEKSYAIQAGREIRIMVKPEVLDDTGCIEMARNIVKQIESELEYPGQIKVNVIRETRAIEYAK</sequence>
<name>RNY_CLOB1</name>
<proteinExistence type="inferred from homology"/>
<accession>A7FVX8</accession>
<feature type="chain" id="PRO_0000344845" description="Ribonuclease Y">
    <location>
        <begin position="1"/>
        <end position="513"/>
    </location>
</feature>
<feature type="transmembrane region" description="Helical" evidence="1">
    <location>
        <begin position="6"/>
        <end position="26"/>
    </location>
</feature>
<feature type="domain" description="KH" evidence="1">
    <location>
        <begin position="203"/>
        <end position="288"/>
    </location>
</feature>
<feature type="domain" description="HD" evidence="2">
    <location>
        <begin position="329"/>
        <end position="422"/>
    </location>
</feature>
<protein>
    <recommendedName>
        <fullName evidence="1">Ribonuclease Y</fullName>
        <shortName evidence="1">RNase Y</shortName>
        <ecNumber evidence="1">3.1.-.-</ecNumber>
    </recommendedName>
</protein>
<evidence type="ECO:0000255" key="1">
    <source>
        <dbReference type="HAMAP-Rule" id="MF_00335"/>
    </source>
</evidence>
<evidence type="ECO:0000255" key="2">
    <source>
        <dbReference type="PROSITE-ProRule" id="PRU01175"/>
    </source>
</evidence>
<gene>
    <name evidence="1" type="primary">rny</name>
    <name type="ordered locus">CLB_2267</name>
</gene>
<reference key="1">
    <citation type="journal article" date="2007" name="PLoS ONE">
        <title>Analysis of the neurotoxin complex genes in Clostridium botulinum A1-A4 and B1 strains: BoNT/A3, /Ba4 and /B1 clusters are located within plasmids.</title>
        <authorList>
            <person name="Smith T.J."/>
            <person name="Hill K.K."/>
            <person name="Foley B.T."/>
            <person name="Detter J.C."/>
            <person name="Munk A.C."/>
            <person name="Bruce D.C."/>
            <person name="Doggett N.A."/>
            <person name="Smith L.A."/>
            <person name="Marks J.D."/>
            <person name="Xie G."/>
            <person name="Brettin T.S."/>
        </authorList>
    </citation>
    <scope>NUCLEOTIDE SEQUENCE [LARGE SCALE GENOMIC DNA]</scope>
    <source>
        <strain>ATCC 19397 / Type A</strain>
    </source>
</reference>
<dbReference type="EC" id="3.1.-.-" evidence="1"/>
<dbReference type="EMBL" id="CP000726">
    <property type="protein sequence ID" value="ABS32809.1"/>
    <property type="molecule type" value="Genomic_DNA"/>
</dbReference>
<dbReference type="RefSeq" id="WP_011986783.1">
    <property type="nucleotide sequence ID" value="NC_009697.1"/>
</dbReference>
<dbReference type="GeneID" id="5186659"/>
<dbReference type="KEGG" id="cba:CLB_2267"/>
<dbReference type="HOGENOM" id="CLU_028328_1_0_9"/>
<dbReference type="GO" id="GO:0005886">
    <property type="term" value="C:plasma membrane"/>
    <property type="evidence" value="ECO:0007669"/>
    <property type="project" value="UniProtKB-SubCell"/>
</dbReference>
<dbReference type="GO" id="GO:0003723">
    <property type="term" value="F:RNA binding"/>
    <property type="evidence" value="ECO:0007669"/>
    <property type="project" value="UniProtKB-UniRule"/>
</dbReference>
<dbReference type="GO" id="GO:0004521">
    <property type="term" value="F:RNA endonuclease activity"/>
    <property type="evidence" value="ECO:0007669"/>
    <property type="project" value="UniProtKB-UniRule"/>
</dbReference>
<dbReference type="GO" id="GO:0006402">
    <property type="term" value="P:mRNA catabolic process"/>
    <property type="evidence" value="ECO:0007669"/>
    <property type="project" value="UniProtKB-UniRule"/>
</dbReference>
<dbReference type="CDD" id="cd00077">
    <property type="entry name" value="HDc"/>
    <property type="match status" value="1"/>
</dbReference>
<dbReference type="CDD" id="cd22431">
    <property type="entry name" value="KH-I_RNaseY"/>
    <property type="match status" value="1"/>
</dbReference>
<dbReference type="FunFam" id="1.10.3210.10:FF:000003">
    <property type="entry name" value="Ribonuclease Y"/>
    <property type="match status" value="1"/>
</dbReference>
<dbReference type="FunFam" id="3.30.1370.10:FF:000006">
    <property type="entry name" value="Ribonuclease Y"/>
    <property type="match status" value="1"/>
</dbReference>
<dbReference type="Gene3D" id="1.10.3210.10">
    <property type="entry name" value="Hypothetical protein af1432"/>
    <property type="match status" value="1"/>
</dbReference>
<dbReference type="Gene3D" id="3.30.1370.10">
    <property type="entry name" value="K Homology domain, type 1"/>
    <property type="match status" value="1"/>
</dbReference>
<dbReference type="HAMAP" id="MF_00335">
    <property type="entry name" value="RNase_Y"/>
    <property type="match status" value="1"/>
</dbReference>
<dbReference type="InterPro" id="IPR003607">
    <property type="entry name" value="HD/PDEase_dom"/>
</dbReference>
<dbReference type="InterPro" id="IPR006674">
    <property type="entry name" value="HD_domain"/>
</dbReference>
<dbReference type="InterPro" id="IPR006675">
    <property type="entry name" value="HDIG_dom"/>
</dbReference>
<dbReference type="InterPro" id="IPR004087">
    <property type="entry name" value="KH_dom"/>
</dbReference>
<dbReference type="InterPro" id="IPR004088">
    <property type="entry name" value="KH_dom_type_1"/>
</dbReference>
<dbReference type="InterPro" id="IPR036612">
    <property type="entry name" value="KH_dom_type_1_sf"/>
</dbReference>
<dbReference type="InterPro" id="IPR017705">
    <property type="entry name" value="Ribonuclease_Y"/>
</dbReference>
<dbReference type="InterPro" id="IPR022711">
    <property type="entry name" value="RNase_Y_N"/>
</dbReference>
<dbReference type="NCBIfam" id="TIGR00277">
    <property type="entry name" value="HDIG"/>
    <property type="match status" value="1"/>
</dbReference>
<dbReference type="NCBIfam" id="TIGR03319">
    <property type="entry name" value="RNase_Y"/>
    <property type="match status" value="1"/>
</dbReference>
<dbReference type="PANTHER" id="PTHR12826">
    <property type="entry name" value="RIBONUCLEASE Y"/>
    <property type="match status" value="1"/>
</dbReference>
<dbReference type="PANTHER" id="PTHR12826:SF15">
    <property type="entry name" value="RIBONUCLEASE Y"/>
    <property type="match status" value="1"/>
</dbReference>
<dbReference type="Pfam" id="PF01966">
    <property type="entry name" value="HD"/>
    <property type="match status" value="1"/>
</dbReference>
<dbReference type="Pfam" id="PF00013">
    <property type="entry name" value="KH_1"/>
    <property type="match status" value="1"/>
</dbReference>
<dbReference type="Pfam" id="PF12072">
    <property type="entry name" value="RNase_Y_N"/>
    <property type="match status" value="1"/>
</dbReference>
<dbReference type="SMART" id="SM00471">
    <property type="entry name" value="HDc"/>
    <property type="match status" value="1"/>
</dbReference>
<dbReference type="SMART" id="SM00322">
    <property type="entry name" value="KH"/>
    <property type="match status" value="1"/>
</dbReference>
<dbReference type="SUPFAM" id="SSF54791">
    <property type="entry name" value="Eukaryotic type KH-domain (KH-domain type I)"/>
    <property type="match status" value="1"/>
</dbReference>
<dbReference type="SUPFAM" id="SSF109604">
    <property type="entry name" value="HD-domain/PDEase-like"/>
    <property type="match status" value="1"/>
</dbReference>
<dbReference type="PROSITE" id="PS51831">
    <property type="entry name" value="HD"/>
    <property type="match status" value="1"/>
</dbReference>
<dbReference type="PROSITE" id="PS50084">
    <property type="entry name" value="KH_TYPE_1"/>
    <property type="match status" value="1"/>
</dbReference>
<keyword id="KW-1003">Cell membrane</keyword>
<keyword id="KW-0255">Endonuclease</keyword>
<keyword id="KW-0378">Hydrolase</keyword>
<keyword id="KW-0472">Membrane</keyword>
<keyword id="KW-0540">Nuclease</keyword>
<keyword id="KW-0694">RNA-binding</keyword>
<keyword id="KW-0812">Transmembrane</keyword>
<keyword id="KW-1133">Transmembrane helix</keyword>